<name>NEP1_METJA</name>
<proteinExistence type="evidence at protein level"/>
<protein>
    <recommendedName>
        <fullName>Ribosomal RNA small subunit methyltransferase Nep1</fullName>
        <ecNumber>2.1.1.-</ecNumber>
    </recommendedName>
    <alternativeName>
        <fullName>16S rRNA (pseudouridine-N1-)-methyltransferase Nep1</fullName>
    </alternativeName>
    <alternativeName>
        <fullName>16S rRNA Psi914 methyltransferase</fullName>
    </alternativeName>
</protein>
<sequence>MTYNIILAKSALELIPEEIKNKIRKSRVYKYDILDSNYHYKAMEKLKDKEMRGRPDIIHISLLNILDSPINHEKKLNIYIHTYDDKVLKINPETRLPRNYFRFLGVMEKVLKGERNHLIKMEEKTLEDLLNEINAKKIAIMTKTGKLTHPKLLKEYDTFIIGGFPYGKLKINKEKVFGDIKEISIYNKGLMAWTVCGIICYSLSF</sequence>
<comment type="function">
    <text evidence="2">Methyltransferase involved in ribosomal biogenesis. Specifically catalyzes the N1-methylation of pseudouridine at position 914 (Psi914) in 16S rRNA. Is not able to methylate uridine at this position.</text>
</comment>
<comment type="catalytic activity">
    <reaction evidence="2">
        <text>pseudouridine(914) in M. jannaschii 16S rRNA + S-adenosyl-L-methionine = N(1)-methylpseudouridine(914) in M. jannaschii 16S rRNA + S-adenosyl-L-homocysteine + H(+)</text>
        <dbReference type="Rhea" id="RHEA:46716"/>
        <dbReference type="Rhea" id="RHEA-COMP:11640"/>
        <dbReference type="Rhea" id="RHEA-COMP:11641"/>
        <dbReference type="ChEBI" id="CHEBI:15378"/>
        <dbReference type="ChEBI" id="CHEBI:57856"/>
        <dbReference type="ChEBI" id="CHEBI:59789"/>
        <dbReference type="ChEBI" id="CHEBI:65314"/>
        <dbReference type="ChEBI" id="CHEBI:74890"/>
    </reaction>
</comment>
<comment type="subunit">
    <text evidence="1">Homodimer.</text>
</comment>
<comment type="similarity">
    <text evidence="3">Belongs to the class IV-like SAM-binding methyltransferase superfamily. RNA methyltransferase NEP1 family.</text>
</comment>
<reference key="1">
    <citation type="journal article" date="1996" name="Science">
        <title>Complete genome sequence of the methanogenic archaeon, Methanococcus jannaschii.</title>
        <authorList>
            <person name="Bult C.J."/>
            <person name="White O."/>
            <person name="Olsen G.J."/>
            <person name="Zhou L."/>
            <person name="Fleischmann R.D."/>
            <person name="Sutton G.G."/>
            <person name="Blake J.A."/>
            <person name="FitzGerald L.M."/>
            <person name="Clayton R.A."/>
            <person name="Gocayne J.D."/>
            <person name="Kerlavage A.R."/>
            <person name="Dougherty B.A."/>
            <person name="Tomb J.-F."/>
            <person name="Adams M.D."/>
            <person name="Reich C.I."/>
            <person name="Overbeek R."/>
            <person name="Kirkness E.F."/>
            <person name="Weinstock K.G."/>
            <person name="Merrick J.M."/>
            <person name="Glodek A."/>
            <person name="Scott J.L."/>
            <person name="Geoghagen N.S.M."/>
            <person name="Weidman J.F."/>
            <person name="Fuhrmann J.L."/>
            <person name="Nguyen D."/>
            <person name="Utterback T.R."/>
            <person name="Kelley J.M."/>
            <person name="Peterson J.D."/>
            <person name="Sadow P.W."/>
            <person name="Hanna M.C."/>
            <person name="Cotton M.D."/>
            <person name="Roberts K.M."/>
            <person name="Hurst M.A."/>
            <person name="Kaine B.P."/>
            <person name="Borodovsky M."/>
            <person name="Klenk H.-P."/>
            <person name="Fraser C.M."/>
            <person name="Smith H.O."/>
            <person name="Woese C.R."/>
            <person name="Venter J.C."/>
        </authorList>
    </citation>
    <scope>NUCLEOTIDE SEQUENCE [LARGE SCALE GENOMIC DNA]</scope>
    <source>
        <strain>ATCC 43067 / DSM 2661 / JAL-1 / JCM 10045 / NBRC 100440</strain>
    </source>
</reference>
<reference key="2">
    <citation type="journal article" date="2009" name="Biomol. NMR. Assign.">
        <title>Backbone resonance assignments of the 48 kDa dimeric putative 18S rRNA-methyltransferase Nep1 from Methanocaldococcus jannaschii.</title>
        <authorList>
            <person name="Wurm J.P."/>
            <person name="Duchardt E."/>
            <person name="Meyer B."/>
            <person name="Leal B.Z."/>
            <person name="Kotter P."/>
            <person name="Entian K.D."/>
            <person name="Wohnert J."/>
        </authorList>
    </citation>
    <scope>NMR STUDIES</scope>
    <source>
        <strain>ATCC 43067 / DSM 2661 / JAL-1 / JCM 10045 / NBRC 100440</strain>
    </source>
</reference>
<reference key="3">
    <citation type="journal article" date="2010" name="Nucleic Acids Res.">
        <title>The ribosome assembly factor Nep1 responsible for Bowen-Conradi syndrome is a pseudouridine-N1-specific methyltransferase.</title>
        <authorList>
            <person name="Wurm J.P."/>
            <person name="Meyer B."/>
            <person name="Bahr U."/>
            <person name="Held M."/>
            <person name="Frolow O."/>
            <person name="Kotter P."/>
            <person name="Engels J.W."/>
            <person name="Heckel A."/>
            <person name="Karas M."/>
            <person name="Entian K.D."/>
            <person name="Wohnert J."/>
        </authorList>
    </citation>
    <scope>FUNCTION</scope>
    <scope>CATALYTIC ACTIVITY</scope>
    <scope>RNA-BINDING</scope>
    <scope>RNA-BINDING SITES</scope>
    <source>
        <strain>ATCC 43067 / DSM 2661 / JAL-1 / JCM 10045 / NBRC 100440</strain>
    </source>
</reference>
<reference key="4">
    <citation type="journal article" date="2008" name="Nucleic Acids Res.">
        <title>The crystal structure of Nep1 reveals an extended SPOUT-class methyltransferase fold and a pre-organized SAM-binding site.</title>
        <authorList>
            <person name="Taylor A.B."/>
            <person name="Meyer B."/>
            <person name="Leal B.Z."/>
            <person name="Kotter P."/>
            <person name="Schirf V."/>
            <person name="Demeler B."/>
            <person name="Hart P.J."/>
            <person name="Entian K.D."/>
            <person name="Wohnert J."/>
        </authorList>
    </citation>
    <scope>X-RAY CRYSTALLOGRAPHY (2.15 ANGSTROMS) OF APOPROTEIN AND COMPLEXES WITH S-ADENOSYL-L-HOMOCYSTEINE AND SINEFUNGIN INHIBITOR</scope>
    <scope>SUBUNIT</scope>
    <scope>RNA-BINDING SITES</scope>
    <source>
        <strain>ATCC 43067 / DSM 2661 / JAL-1 / JCM 10045 / NBRC 100440</strain>
    </source>
</reference>
<keyword id="KW-0002">3D-structure</keyword>
<keyword id="KW-0489">Methyltransferase</keyword>
<keyword id="KW-1185">Reference proteome</keyword>
<keyword id="KW-0690">Ribosome biogenesis</keyword>
<keyword id="KW-0694">RNA-binding</keyword>
<keyword id="KW-0698">rRNA processing</keyword>
<keyword id="KW-0699">rRNA-binding</keyword>
<keyword id="KW-0949">S-adenosyl-L-methionine</keyword>
<keyword id="KW-0808">Transferase</keyword>
<dbReference type="EC" id="2.1.1.-"/>
<dbReference type="EMBL" id="L77117">
    <property type="protein sequence ID" value="AAB98551.1"/>
    <property type="molecule type" value="Genomic_DNA"/>
</dbReference>
<dbReference type="PIR" id="E64369">
    <property type="entry name" value="E64369"/>
</dbReference>
<dbReference type="RefSeq" id="WP_010870061.1">
    <property type="nucleotide sequence ID" value="NC_000909.1"/>
</dbReference>
<dbReference type="PDB" id="3BBD">
    <property type="method" value="X-ray"/>
    <property type="resolution" value="2.15 A"/>
    <property type="chains" value="A/B=1-205"/>
</dbReference>
<dbReference type="PDB" id="3BBE">
    <property type="method" value="X-ray"/>
    <property type="resolution" value="2.20 A"/>
    <property type="chains" value="A/B=1-205"/>
</dbReference>
<dbReference type="PDB" id="3BBH">
    <property type="method" value="X-ray"/>
    <property type="resolution" value="2.25 A"/>
    <property type="chains" value="A/B=1-205"/>
</dbReference>
<dbReference type="PDBsum" id="3BBD"/>
<dbReference type="PDBsum" id="3BBE"/>
<dbReference type="PDBsum" id="3BBH"/>
<dbReference type="BMRB" id="Q57977"/>
<dbReference type="SMR" id="Q57977"/>
<dbReference type="FunCoup" id="Q57977">
    <property type="interactions" value="137"/>
</dbReference>
<dbReference type="STRING" id="243232.MJ_0557"/>
<dbReference type="PaxDb" id="243232-MJ_0557"/>
<dbReference type="EnsemblBacteria" id="AAB98551">
    <property type="protein sequence ID" value="AAB98551"/>
    <property type="gene ID" value="MJ_0557"/>
</dbReference>
<dbReference type="GeneID" id="1451422"/>
<dbReference type="KEGG" id="mja:MJ_0557"/>
<dbReference type="eggNOG" id="arCOG04122">
    <property type="taxonomic scope" value="Archaea"/>
</dbReference>
<dbReference type="HOGENOM" id="CLU_055846_1_3_2"/>
<dbReference type="InParanoid" id="Q57977"/>
<dbReference type="OrthoDB" id="7612at2157"/>
<dbReference type="PhylomeDB" id="Q57977"/>
<dbReference type="BRENDA" id="2.1.1.257">
    <property type="organism ID" value="3260"/>
</dbReference>
<dbReference type="BRENDA" id="2.1.1.260">
    <property type="organism ID" value="3260"/>
</dbReference>
<dbReference type="EvolutionaryTrace" id="Q57977"/>
<dbReference type="Proteomes" id="UP000000805">
    <property type="component" value="Chromosome"/>
</dbReference>
<dbReference type="GO" id="GO:0042803">
    <property type="term" value="F:protein homodimerization activity"/>
    <property type="evidence" value="ECO:0000314"/>
    <property type="project" value="UniProtKB"/>
</dbReference>
<dbReference type="GO" id="GO:0070037">
    <property type="term" value="F:rRNA (pseudouridine) methyltransferase activity"/>
    <property type="evidence" value="ECO:0000314"/>
    <property type="project" value="UniProtKB"/>
</dbReference>
<dbReference type="GO" id="GO:0019843">
    <property type="term" value="F:rRNA binding"/>
    <property type="evidence" value="ECO:0000314"/>
    <property type="project" value="UniProtKB"/>
</dbReference>
<dbReference type="GO" id="GO:0070475">
    <property type="term" value="P:rRNA base methylation"/>
    <property type="evidence" value="ECO:0000318"/>
    <property type="project" value="GO_Central"/>
</dbReference>
<dbReference type="CDD" id="cd18088">
    <property type="entry name" value="Nep1-like"/>
    <property type="match status" value="1"/>
</dbReference>
<dbReference type="FunFam" id="3.40.1280.10:FF:000042">
    <property type="entry name" value="Ribosomal RNA small subunit methyltransferase Nep1"/>
    <property type="match status" value="1"/>
</dbReference>
<dbReference type="Gene3D" id="3.40.1280.10">
    <property type="match status" value="1"/>
</dbReference>
<dbReference type="HAMAP" id="MF_00554">
    <property type="entry name" value="NEP1"/>
    <property type="match status" value="1"/>
</dbReference>
<dbReference type="InterPro" id="IPR029028">
    <property type="entry name" value="Alpha/beta_knot_MTases"/>
</dbReference>
<dbReference type="InterPro" id="IPR005304">
    <property type="entry name" value="Rbsml_bgen_MeTrfase_EMG1/NEP1"/>
</dbReference>
<dbReference type="InterPro" id="IPR023503">
    <property type="entry name" value="Ribosome_NEP1_arc"/>
</dbReference>
<dbReference type="InterPro" id="IPR029026">
    <property type="entry name" value="tRNA_m1G_MTases_N"/>
</dbReference>
<dbReference type="NCBIfam" id="NF003204">
    <property type="entry name" value="PRK04171.1-3"/>
    <property type="match status" value="1"/>
</dbReference>
<dbReference type="PANTHER" id="PTHR12636">
    <property type="entry name" value="NEP1/MRA1"/>
    <property type="match status" value="1"/>
</dbReference>
<dbReference type="PANTHER" id="PTHR12636:SF5">
    <property type="entry name" value="RIBOSOMAL RNA SMALL SUBUNIT METHYLTRANSFERASE NEP1"/>
    <property type="match status" value="1"/>
</dbReference>
<dbReference type="Pfam" id="PF03587">
    <property type="entry name" value="EMG1"/>
    <property type="match status" value="1"/>
</dbReference>
<dbReference type="SUPFAM" id="SSF75217">
    <property type="entry name" value="alpha/beta knot"/>
    <property type="match status" value="1"/>
</dbReference>
<accession>Q57977</accession>
<evidence type="ECO:0000269" key="1">
    <source>
    </source>
</evidence>
<evidence type="ECO:0000269" key="2">
    <source>
    </source>
</evidence>
<evidence type="ECO:0000305" key="3"/>
<evidence type="ECO:0007829" key="4">
    <source>
        <dbReference type="PDB" id="3BBD"/>
    </source>
</evidence>
<organism>
    <name type="scientific">Methanocaldococcus jannaschii (strain ATCC 43067 / DSM 2661 / JAL-1 / JCM 10045 / NBRC 100440)</name>
    <name type="common">Methanococcus jannaschii</name>
    <dbReference type="NCBI Taxonomy" id="243232"/>
    <lineage>
        <taxon>Archaea</taxon>
        <taxon>Methanobacteriati</taxon>
        <taxon>Methanobacteriota</taxon>
        <taxon>Methanomada group</taxon>
        <taxon>Methanococci</taxon>
        <taxon>Methanococcales</taxon>
        <taxon>Methanocaldococcaceae</taxon>
        <taxon>Methanocaldococcus</taxon>
    </lineage>
</organism>
<feature type="chain" id="PRO_0000158616" description="Ribosomal RNA small subunit methyltransferase Nep1">
    <location>
        <begin position="1"/>
        <end position="205"/>
    </location>
</feature>
<feature type="binding site">
    <location>
        <begin position="141"/>
        <end position="143"/>
    </location>
    <ligand>
        <name>S-adenosyl-L-methionine</name>
        <dbReference type="ChEBI" id="CHEBI:59789"/>
    </ligand>
</feature>
<feature type="binding site">
    <location>
        <position position="162"/>
    </location>
    <ligand>
        <name>S-adenosyl-L-methionine</name>
        <dbReference type="ChEBI" id="CHEBI:59789"/>
    </ligand>
</feature>
<feature type="binding site">
    <location>
        <position position="167"/>
    </location>
    <ligand>
        <name>S-adenosyl-L-methionine</name>
        <dbReference type="ChEBI" id="CHEBI:59789"/>
    </ligand>
</feature>
<feature type="binding site">
    <location>
        <begin position="185"/>
        <end position="190"/>
    </location>
    <ligand>
        <name>S-adenosyl-L-methionine</name>
        <dbReference type="ChEBI" id="CHEBI:59789"/>
    </ligand>
</feature>
<feature type="site" description="Interaction with substrate rRNA">
    <location>
        <position position="54"/>
    </location>
</feature>
<feature type="site" description="Stabilizes Arg-54">
    <location>
        <position position="56"/>
    </location>
</feature>
<feature type="site" description="Interaction with substrate rRNA">
    <location>
        <position position="95"/>
    </location>
</feature>
<feature type="site" description="Interaction with substrate rRNA">
    <location>
        <position position="98"/>
    </location>
</feature>
<feature type="site" description="Interaction with substrate rRNA">
    <location>
        <position position="102"/>
    </location>
</feature>
<feature type="strand" evidence="4">
    <location>
        <begin position="3"/>
        <end position="11"/>
    </location>
</feature>
<feature type="helix" evidence="4">
    <location>
        <begin position="17"/>
        <end position="22"/>
    </location>
</feature>
<feature type="helix" evidence="4">
    <location>
        <begin position="36"/>
        <end position="39"/>
    </location>
</feature>
<feature type="turn" evidence="4">
    <location>
        <begin position="40"/>
        <end position="45"/>
    </location>
</feature>
<feature type="helix" evidence="4">
    <location>
        <begin position="49"/>
        <end position="51"/>
    </location>
</feature>
<feature type="helix" evidence="4">
    <location>
        <begin position="55"/>
        <end position="66"/>
    </location>
</feature>
<feature type="helix" evidence="4">
    <location>
        <begin position="69"/>
        <end position="72"/>
    </location>
</feature>
<feature type="strand" evidence="4">
    <location>
        <begin position="76"/>
        <end position="82"/>
    </location>
</feature>
<feature type="strand" evidence="4">
    <location>
        <begin position="85"/>
        <end position="90"/>
    </location>
</feature>
<feature type="helix" evidence="4">
    <location>
        <begin position="100"/>
        <end position="111"/>
    </location>
</feature>
<feature type="strand" evidence="4">
    <location>
        <begin position="117"/>
        <end position="123"/>
    </location>
</feature>
<feature type="helix" evidence="4">
    <location>
        <begin position="126"/>
        <end position="132"/>
    </location>
</feature>
<feature type="strand" evidence="4">
    <location>
        <begin position="137"/>
        <end position="141"/>
    </location>
</feature>
<feature type="strand" evidence="4">
    <location>
        <begin position="145"/>
        <end position="147"/>
    </location>
</feature>
<feature type="helix" evidence="4">
    <location>
        <begin position="150"/>
        <end position="155"/>
    </location>
</feature>
<feature type="strand" evidence="4">
    <location>
        <begin position="157"/>
        <end position="162"/>
    </location>
</feature>
<feature type="strand" evidence="4">
    <location>
        <begin position="164"/>
        <end position="167"/>
    </location>
</feature>
<feature type="helix" evidence="4">
    <location>
        <begin position="173"/>
        <end position="175"/>
    </location>
</feature>
<feature type="strand" evidence="4">
    <location>
        <begin position="177"/>
        <end position="188"/>
    </location>
</feature>
<feature type="helix" evidence="4">
    <location>
        <begin position="192"/>
        <end position="204"/>
    </location>
</feature>
<gene>
    <name type="primary">nep1</name>
    <name type="ordered locus">MJ0557</name>
</gene>